<accession>Q47ZS6</accession>
<feature type="chain" id="PRO_0000277724" description="Integration host factor subunit alpha">
    <location>
        <begin position="1"/>
        <end position="97"/>
    </location>
</feature>
<comment type="function">
    <text evidence="1">This protein is one of the two subunits of integration host factor, a specific DNA-binding protein that functions in genetic recombination as well as in transcriptional and translational control.</text>
</comment>
<comment type="subunit">
    <text evidence="1">Heterodimer of an alpha and a beta chain.</text>
</comment>
<comment type="similarity">
    <text evidence="1">Belongs to the bacterial histone-like protein family.</text>
</comment>
<name>IHFA_COLP3</name>
<keyword id="KW-0233">DNA recombination</keyword>
<keyword id="KW-0238">DNA-binding</keyword>
<keyword id="KW-0804">Transcription</keyword>
<keyword id="KW-0805">Transcription regulation</keyword>
<keyword id="KW-0810">Translation regulation</keyword>
<reference key="1">
    <citation type="journal article" date="2005" name="Proc. Natl. Acad. Sci. U.S.A.">
        <title>The psychrophilic lifestyle as revealed by the genome sequence of Colwellia psychrerythraea 34H through genomic and proteomic analyses.</title>
        <authorList>
            <person name="Methe B.A."/>
            <person name="Nelson K.E."/>
            <person name="Deming J.W."/>
            <person name="Momen B."/>
            <person name="Melamud E."/>
            <person name="Zhang X."/>
            <person name="Moult J."/>
            <person name="Madupu R."/>
            <person name="Nelson W.C."/>
            <person name="Dodson R.J."/>
            <person name="Brinkac L.M."/>
            <person name="Daugherty S.C."/>
            <person name="Durkin A.S."/>
            <person name="DeBoy R.T."/>
            <person name="Kolonay J.F."/>
            <person name="Sullivan S.A."/>
            <person name="Zhou L."/>
            <person name="Davidsen T.M."/>
            <person name="Wu M."/>
            <person name="Huston A.L."/>
            <person name="Lewis M."/>
            <person name="Weaver B."/>
            <person name="Weidman J.F."/>
            <person name="Khouri H."/>
            <person name="Utterback T.R."/>
            <person name="Feldblyum T.V."/>
            <person name="Fraser C.M."/>
        </authorList>
    </citation>
    <scope>NUCLEOTIDE SEQUENCE [LARGE SCALE GENOMIC DNA]</scope>
    <source>
        <strain>34H / ATCC BAA-681</strain>
    </source>
</reference>
<proteinExistence type="inferred from homology"/>
<protein>
    <recommendedName>
        <fullName evidence="1">Integration host factor subunit alpha</fullName>
        <shortName evidence="1">IHF-alpha</shortName>
    </recommendedName>
</protein>
<sequence>MALTKAEVAEHLFEKVGLSKRDAKDMVEIFFEEIRETLESGDQVKLSGFGNFDLRLKSERPGRNPKTGEDIPISARKVVTFRPGQKLKSRVEDGNSD</sequence>
<organism>
    <name type="scientific">Colwellia psychrerythraea (strain 34H / ATCC BAA-681)</name>
    <name type="common">Vibrio psychroerythus</name>
    <dbReference type="NCBI Taxonomy" id="167879"/>
    <lineage>
        <taxon>Bacteria</taxon>
        <taxon>Pseudomonadati</taxon>
        <taxon>Pseudomonadota</taxon>
        <taxon>Gammaproteobacteria</taxon>
        <taxon>Alteromonadales</taxon>
        <taxon>Colwelliaceae</taxon>
        <taxon>Colwellia</taxon>
    </lineage>
</organism>
<evidence type="ECO:0000255" key="1">
    <source>
        <dbReference type="HAMAP-Rule" id="MF_00380"/>
    </source>
</evidence>
<gene>
    <name evidence="1" type="primary">ihfA</name>
    <name evidence="1" type="synonym">himA</name>
    <name type="ordered locus">CPS_2994</name>
</gene>
<dbReference type="EMBL" id="CP000083">
    <property type="protein sequence ID" value="AAZ24737.1"/>
    <property type="molecule type" value="Genomic_DNA"/>
</dbReference>
<dbReference type="RefSeq" id="WP_011043782.1">
    <property type="nucleotide sequence ID" value="NC_003910.7"/>
</dbReference>
<dbReference type="SMR" id="Q47ZS6"/>
<dbReference type="STRING" id="167879.CPS_2994"/>
<dbReference type="KEGG" id="cps:CPS_2994"/>
<dbReference type="eggNOG" id="COG0776">
    <property type="taxonomic scope" value="Bacteria"/>
</dbReference>
<dbReference type="HOGENOM" id="CLU_105066_1_0_6"/>
<dbReference type="Proteomes" id="UP000000547">
    <property type="component" value="Chromosome"/>
</dbReference>
<dbReference type="GO" id="GO:0005829">
    <property type="term" value="C:cytosol"/>
    <property type="evidence" value="ECO:0007669"/>
    <property type="project" value="TreeGrafter"/>
</dbReference>
<dbReference type="GO" id="GO:0003677">
    <property type="term" value="F:DNA binding"/>
    <property type="evidence" value="ECO:0007669"/>
    <property type="project" value="UniProtKB-UniRule"/>
</dbReference>
<dbReference type="GO" id="GO:0030527">
    <property type="term" value="F:structural constituent of chromatin"/>
    <property type="evidence" value="ECO:0007669"/>
    <property type="project" value="InterPro"/>
</dbReference>
<dbReference type="GO" id="GO:0006310">
    <property type="term" value="P:DNA recombination"/>
    <property type="evidence" value="ECO:0007669"/>
    <property type="project" value="UniProtKB-UniRule"/>
</dbReference>
<dbReference type="GO" id="GO:0009893">
    <property type="term" value="P:positive regulation of metabolic process"/>
    <property type="evidence" value="ECO:0007669"/>
    <property type="project" value="UniProtKB-ARBA"/>
</dbReference>
<dbReference type="GO" id="GO:0006355">
    <property type="term" value="P:regulation of DNA-templated transcription"/>
    <property type="evidence" value="ECO:0007669"/>
    <property type="project" value="UniProtKB-UniRule"/>
</dbReference>
<dbReference type="GO" id="GO:0006417">
    <property type="term" value="P:regulation of translation"/>
    <property type="evidence" value="ECO:0007669"/>
    <property type="project" value="UniProtKB-UniRule"/>
</dbReference>
<dbReference type="CDD" id="cd13835">
    <property type="entry name" value="IHF_A"/>
    <property type="match status" value="1"/>
</dbReference>
<dbReference type="FunFam" id="4.10.520.10:FF:000002">
    <property type="entry name" value="Integration host factor subunit alpha"/>
    <property type="match status" value="1"/>
</dbReference>
<dbReference type="Gene3D" id="4.10.520.10">
    <property type="entry name" value="IHF-like DNA-binding proteins"/>
    <property type="match status" value="1"/>
</dbReference>
<dbReference type="HAMAP" id="MF_00380">
    <property type="entry name" value="IHF_alpha"/>
    <property type="match status" value="1"/>
</dbReference>
<dbReference type="InterPro" id="IPR000119">
    <property type="entry name" value="Hist_DNA-bd"/>
</dbReference>
<dbReference type="InterPro" id="IPR020816">
    <property type="entry name" value="Histone-like_DNA-bd_CS"/>
</dbReference>
<dbReference type="InterPro" id="IPR010992">
    <property type="entry name" value="IHF-like_DNA-bd_dom_sf"/>
</dbReference>
<dbReference type="InterPro" id="IPR005684">
    <property type="entry name" value="IHF_alpha"/>
</dbReference>
<dbReference type="NCBIfam" id="TIGR00987">
    <property type="entry name" value="himA"/>
    <property type="match status" value="1"/>
</dbReference>
<dbReference type="NCBIfam" id="NF001401">
    <property type="entry name" value="PRK00285.1"/>
    <property type="match status" value="1"/>
</dbReference>
<dbReference type="PANTHER" id="PTHR33175">
    <property type="entry name" value="DNA-BINDING PROTEIN HU"/>
    <property type="match status" value="1"/>
</dbReference>
<dbReference type="PANTHER" id="PTHR33175:SF2">
    <property type="entry name" value="INTEGRATION HOST FACTOR SUBUNIT ALPHA"/>
    <property type="match status" value="1"/>
</dbReference>
<dbReference type="Pfam" id="PF00216">
    <property type="entry name" value="Bac_DNA_binding"/>
    <property type="match status" value="1"/>
</dbReference>
<dbReference type="PRINTS" id="PR01727">
    <property type="entry name" value="DNABINDINGHU"/>
</dbReference>
<dbReference type="SMART" id="SM00411">
    <property type="entry name" value="BHL"/>
    <property type="match status" value="1"/>
</dbReference>
<dbReference type="SUPFAM" id="SSF47729">
    <property type="entry name" value="IHF-like DNA-binding proteins"/>
    <property type="match status" value="1"/>
</dbReference>
<dbReference type="PROSITE" id="PS00045">
    <property type="entry name" value="HISTONE_LIKE"/>
    <property type="match status" value="1"/>
</dbReference>